<sequence length="524" mass="58692">MLVKVFSFFILMITMVVIGVSKEYCDDKQSCQNFLLELKAGSSSLSEIRRRDLLIIVLKNSVRRIDMVMIGVMDDTKQHEEMENDLLGVKEDTKLFEEMMESTKDRMIRSVEELLGGEFPNRGSYENVHTWLSSVLTSYITCIDEIGEGAYKRRVEPKLEDLISRARIALALFISISPRDNTELISVIPNSPSWLFHVDKKDLYLNAEALKKIADVVVAKDGTGKYSTVNAAIAAAPQHSQKRFVIYIKTGIYDEIVVIENTKPNLTLIGDGQDLTIITSNLSASNVRRTFNTATVASNGNGFIGVDMCFRNTAGPAKGPAVALRVSGDMSVIYRCRVEGYQDALYPHSDRQFYRECFITGTVDFICGNAVAVFQFCQIVARQPKMGQSNVITAQSRAFKDIYSGFTIQKCNITASSDLDTTTVKTYLGRPWRIFSTVAVMQSFIGDLVDPAGWTPWEGETGLSTLHYREYQNRGPGAVTSRRVKWSGFKVMKDPKQATEFTVAKLLDGETWLKETRIPYESGL</sequence>
<name>PME19_ARATH</name>
<keyword id="KW-0063">Aspartyl esterase</keyword>
<keyword id="KW-0134">Cell wall</keyword>
<keyword id="KW-0961">Cell wall biogenesis/degradation</keyword>
<keyword id="KW-1015">Disulfide bond</keyword>
<keyword id="KW-0325">Glycoprotein</keyword>
<keyword id="KW-0378">Hydrolase</keyword>
<keyword id="KW-1185">Reference proteome</keyword>
<keyword id="KW-0964">Secreted</keyword>
<keyword id="KW-0732">Signal</keyword>
<proteinExistence type="evidence at transcript level"/>
<evidence type="ECO:0000250" key="1"/>
<evidence type="ECO:0000255" key="2"/>
<evidence type="ECO:0000269" key="3">
    <source>
    </source>
</evidence>
<evidence type="ECO:0000305" key="4"/>
<feature type="signal peptide" evidence="2">
    <location>
        <begin position="1"/>
        <end position="22"/>
    </location>
</feature>
<feature type="chain" id="PRO_0000371675" description="Probable pectinesterase/pectinesterase inhibitor 19">
    <location>
        <begin position="23"/>
        <end position="524"/>
    </location>
</feature>
<feature type="region of interest" description="Pectinesterase inhibitor 19">
    <location>
        <begin position="23"/>
        <end position="172"/>
    </location>
</feature>
<feature type="region of interest" description="Pectinesterase 19">
    <location>
        <begin position="215"/>
        <end position="510"/>
    </location>
</feature>
<feature type="active site" description="Proton donor; for pectinesterase activity" evidence="1">
    <location>
        <position position="343"/>
    </location>
</feature>
<feature type="active site" description="Nucleophile; for pectinesterase activity" evidence="1">
    <location>
        <position position="364"/>
    </location>
</feature>
<feature type="binding site" evidence="1">
    <location>
        <position position="290"/>
    </location>
    <ligand>
        <name>substrate</name>
        <note>for pectinesterase activity</note>
    </ligand>
</feature>
<feature type="binding site" evidence="1">
    <location>
        <position position="430"/>
    </location>
    <ligand>
        <name>substrate</name>
        <note>for pectinesterase activity</note>
    </ligand>
</feature>
<feature type="binding site" evidence="1">
    <location>
        <position position="432"/>
    </location>
    <ligand>
        <name>substrate</name>
        <note>for pectinesterase activity</note>
    </ligand>
</feature>
<feature type="site" description="Transition state stabilizer" evidence="1">
    <location>
        <position position="342"/>
    </location>
</feature>
<feature type="glycosylation site" description="N-linked (GlcNAc...) asparagine" evidence="2">
    <location>
        <position position="265"/>
    </location>
</feature>
<feature type="glycosylation site" description="N-linked (GlcNAc...) asparagine" evidence="2">
    <location>
        <position position="281"/>
    </location>
</feature>
<feature type="glycosylation site" description="N-linked (GlcNAc...) asparagine" evidence="2">
    <location>
        <position position="412"/>
    </location>
</feature>
<feature type="disulfide bond" evidence="1">
    <location>
        <begin position="357"/>
        <end position="377"/>
    </location>
</feature>
<gene>
    <name type="primary">PME19</name>
    <name type="synonym">ARATH5</name>
    <name type="ordered locus">At1g11590</name>
    <name type="ORF">T23J18.25</name>
</gene>
<organism>
    <name type="scientific">Arabidopsis thaliana</name>
    <name type="common">Mouse-ear cress</name>
    <dbReference type="NCBI Taxonomy" id="3702"/>
    <lineage>
        <taxon>Eukaryota</taxon>
        <taxon>Viridiplantae</taxon>
        <taxon>Streptophyta</taxon>
        <taxon>Embryophyta</taxon>
        <taxon>Tracheophyta</taxon>
        <taxon>Spermatophyta</taxon>
        <taxon>Magnoliopsida</taxon>
        <taxon>eudicotyledons</taxon>
        <taxon>Gunneridae</taxon>
        <taxon>Pentapetalae</taxon>
        <taxon>rosids</taxon>
        <taxon>malvids</taxon>
        <taxon>Brassicales</taxon>
        <taxon>Brassicaceae</taxon>
        <taxon>Camelineae</taxon>
        <taxon>Arabidopsis</taxon>
    </lineage>
</organism>
<reference key="1">
    <citation type="journal article" date="2000" name="Nature">
        <title>Sequence and analysis of chromosome 1 of the plant Arabidopsis thaliana.</title>
        <authorList>
            <person name="Theologis A."/>
            <person name="Ecker J.R."/>
            <person name="Palm C.J."/>
            <person name="Federspiel N.A."/>
            <person name="Kaul S."/>
            <person name="White O."/>
            <person name="Alonso J."/>
            <person name="Altafi H."/>
            <person name="Araujo R."/>
            <person name="Bowman C.L."/>
            <person name="Brooks S.Y."/>
            <person name="Buehler E."/>
            <person name="Chan A."/>
            <person name="Chao Q."/>
            <person name="Chen H."/>
            <person name="Cheuk R.F."/>
            <person name="Chin C.W."/>
            <person name="Chung M.K."/>
            <person name="Conn L."/>
            <person name="Conway A.B."/>
            <person name="Conway A.R."/>
            <person name="Creasy T.H."/>
            <person name="Dewar K."/>
            <person name="Dunn P."/>
            <person name="Etgu P."/>
            <person name="Feldblyum T.V."/>
            <person name="Feng J.-D."/>
            <person name="Fong B."/>
            <person name="Fujii C.Y."/>
            <person name="Gill J.E."/>
            <person name="Goldsmith A.D."/>
            <person name="Haas B."/>
            <person name="Hansen N.F."/>
            <person name="Hughes B."/>
            <person name="Huizar L."/>
            <person name="Hunter J.L."/>
            <person name="Jenkins J."/>
            <person name="Johnson-Hopson C."/>
            <person name="Khan S."/>
            <person name="Khaykin E."/>
            <person name="Kim C.J."/>
            <person name="Koo H.L."/>
            <person name="Kremenetskaia I."/>
            <person name="Kurtz D.B."/>
            <person name="Kwan A."/>
            <person name="Lam B."/>
            <person name="Langin-Hooper S."/>
            <person name="Lee A."/>
            <person name="Lee J.M."/>
            <person name="Lenz C.A."/>
            <person name="Li J.H."/>
            <person name="Li Y.-P."/>
            <person name="Lin X."/>
            <person name="Liu S.X."/>
            <person name="Liu Z.A."/>
            <person name="Luros J.S."/>
            <person name="Maiti R."/>
            <person name="Marziali A."/>
            <person name="Militscher J."/>
            <person name="Miranda M."/>
            <person name="Nguyen M."/>
            <person name="Nierman W.C."/>
            <person name="Osborne B.I."/>
            <person name="Pai G."/>
            <person name="Peterson J."/>
            <person name="Pham P.K."/>
            <person name="Rizzo M."/>
            <person name="Rooney T."/>
            <person name="Rowley D."/>
            <person name="Sakano H."/>
            <person name="Salzberg S.L."/>
            <person name="Schwartz J.R."/>
            <person name="Shinn P."/>
            <person name="Southwick A.M."/>
            <person name="Sun H."/>
            <person name="Tallon L.J."/>
            <person name="Tambunga G."/>
            <person name="Toriumi M.J."/>
            <person name="Town C.D."/>
            <person name="Utterback T."/>
            <person name="Van Aken S."/>
            <person name="Vaysberg M."/>
            <person name="Vysotskaia V.S."/>
            <person name="Walker M."/>
            <person name="Wu D."/>
            <person name="Yu G."/>
            <person name="Fraser C.M."/>
            <person name="Venter J.C."/>
            <person name="Davis R.W."/>
        </authorList>
    </citation>
    <scope>NUCLEOTIDE SEQUENCE [LARGE SCALE GENOMIC DNA]</scope>
    <source>
        <strain>cv. Columbia</strain>
    </source>
</reference>
<reference key="2">
    <citation type="journal article" date="2017" name="Plant J.">
        <title>Araport11: a complete reannotation of the Arabidopsis thaliana reference genome.</title>
        <authorList>
            <person name="Cheng C.Y."/>
            <person name="Krishnakumar V."/>
            <person name="Chan A.P."/>
            <person name="Thibaud-Nissen F."/>
            <person name="Schobel S."/>
            <person name="Town C.D."/>
        </authorList>
    </citation>
    <scope>GENOME REANNOTATION</scope>
    <source>
        <strain>cv. Columbia</strain>
    </source>
</reference>
<reference key="3">
    <citation type="journal article" date="2003" name="Science">
        <title>Empirical analysis of transcriptional activity in the Arabidopsis genome.</title>
        <authorList>
            <person name="Yamada K."/>
            <person name="Lim J."/>
            <person name="Dale J.M."/>
            <person name="Chen H."/>
            <person name="Shinn P."/>
            <person name="Palm C.J."/>
            <person name="Southwick A.M."/>
            <person name="Wu H.C."/>
            <person name="Kim C.J."/>
            <person name="Nguyen M."/>
            <person name="Pham P.K."/>
            <person name="Cheuk R.F."/>
            <person name="Karlin-Newmann G."/>
            <person name="Liu S.X."/>
            <person name="Lam B."/>
            <person name="Sakano H."/>
            <person name="Wu T."/>
            <person name="Yu G."/>
            <person name="Miranda M."/>
            <person name="Quach H.L."/>
            <person name="Tripp M."/>
            <person name="Chang C.H."/>
            <person name="Lee J.M."/>
            <person name="Toriumi M.J."/>
            <person name="Chan M.M."/>
            <person name="Tang C.C."/>
            <person name="Onodera C.S."/>
            <person name="Deng J.M."/>
            <person name="Akiyama K."/>
            <person name="Ansari Y."/>
            <person name="Arakawa T."/>
            <person name="Banh J."/>
            <person name="Banno F."/>
            <person name="Bowser L."/>
            <person name="Brooks S.Y."/>
            <person name="Carninci P."/>
            <person name="Chao Q."/>
            <person name="Choy N."/>
            <person name="Enju A."/>
            <person name="Goldsmith A.D."/>
            <person name="Gurjal M."/>
            <person name="Hansen N.F."/>
            <person name="Hayashizaki Y."/>
            <person name="Johnson-Hopson C."/>
            <person name="Hsuan V.W."/>
            <person name="Iida K."/>
            <person name="Karnes M."/>
            <person name="Khan S."/>
            <person name="Koesema E."/>
            <person name="Ishida J."/>
            <person name="Jiang P.X."/>
            <person name="Jones T."/>
            <person name="Kawai J."/>
            <person name="Kamiya A."/>
            <person name="Meyers C."/>
            <person name="Nakajima M."/>
            <person name="Narusaka M."/>
            <person name="Seki M."/>
            <person name="Sakurai T."/>
            <person name="Satou M."/>
            <person name="Tamse R."/>
            <person name="Vaysberg M."/>
            <person name="Wallender E.K."/>
            <person name="Wong C."/>
            <person name="Yamamura Y."/>
            <person name="Yuan S."/>
            <person name="Shinozaki K."/>
            <person name="Davis R.W."/>
            <person name="Theologis A."/>
            <person name="Ecker J.R."/>
        </authorList>
    </citation>
    <scope>NUCLEOTIDE SEQUENCE [LARGE SCALE MRNA]</scope>
    <source>
        <strain>cv. Columbia</strain>
    </source>
</reference>
<reference key="4">
    <citation type="journal article" date="2004" name="Carbohydr. Res.">
        <title>Pectin methylesterases: sequence-structural features and phylogenetic relationships.</title>
        <authorList>
            <person name="Markovic O."/>
            <person name="Janecek S."/>
        </authorList>
    </citation>
    <scope>GENE FAMILY</scope>
    <scope>NOMENCLATURE</scope>
</reference>
<reference key="5">
    <citation type="journal article" date="2006" name="Planta">
        <title>Comprehensive expression profiling of the pectin methylesterase gene family during silique development in Arabidopsis thaliana.</title>
        <authorList>
            <person name="Louvet R."/>
            <person name="Cavel E."/>
            <person name="Gutierrez L."/>
            <person name="Guenin S."/>
            <person name="Roger D."/>
            <person name="Gillet F."/>
            <person name="Guerineau F."/>
            <person name="Pelloux J."/>
        </authorList>
    </citation>
    <scope>TISSUE SPECIFICITY</scope>
    <scope>DEVELOPMENTAL STAGE</scope>
</reference>
<protein>
    <recommendedName>
        <fullName>Probable pectinesterase/pectinesterase inhibitor 19</fullName>
    </recommendedName>
    <domain>
        <recommendedName>
            <fullName>Pectinesterase inhibitor 19</fullName>
        </recommendedName>
        <alternativeName>
            <fullName>Pectin methylesterase inhibitor 19</fullName>
        </alternativeName>
    </domain>
    <domain>
        <recommendedName>
            <fullName>Pectinesterase 19</fullName>
            <shortName>PE 19</shortName>
            <ecNumber>3.1.1.11</ecNumber>
        </recommendedName>
        <alternativeName>
            <fullName>Pectin methylesterase 19</fullName>
            <shortName>AtPME19</shortName>
        </alternativeName>
        <alternativeName>
            <fullName>Pectin methylesterase 5</fullName>
            <shortName>AtPME5</shortName>
        </alternativeName>
    </domain>
</protein>
<dbReference type="EC" id="3.1.1.11"/>
<dbReference type="EMBL" id="AC011661">
    <property type="protein sequence ID" value="AAF16638.1"/>
    <property type="status" value="ALT_SEQ"/>
    <property type="molecule type" value="Genomic_DNA"/>
</dbReference>
<dbReference type="EMBL" id="CP002684">
    <property type="protein sequence ID" value="AEE28756.1"/>
    <property type="molecule type" value="Genomic_DNA"/>
</dbReference>
<dbReference type="EMBL" id="BT003962">
    <property type="protein sequence ID" value="AAO42007.1"/>
    <property type="molecule type" value="mRNA"/>
</dbReference>
<dbReference type="EMBL" id="BT004987">
    <property type="protein sequence ID" value="AAO50520.1"/>
    <property type="molecule type" value="mRNA"/>
</dbReference>
<dbReference type="RefSeq" id="NP_172625.3">
    <property type="nucleotide sequence ID" value="NM_101032.3"/>
</dbReference>
<dbReference type="SMR" id="Q84JX1"/>
<dbReference type="BioGRID" id="22942">
    <property type="interactions" value="1"/>
</dbReference>
<dbReference type="FunCoup" id="Q84JX1">
    <property type="interactions" value="111"/>
</dbReference>
<dbReference type="STRING" id="3702.Q84JX1"/>
<dbReference type="GlyCosmos" id="Q84JX1">
    <property type="glycosylation" value="3 sites, No reported glycans"/>
</dbReference>
<dbReference type="GlyGen" id="Q84JX1">
    <property type="glycosylation" value="3 sites"/>
</dbReference>
<dbReference type="PaxDb" id="3702-AT1G11590.1"/>
<dbReference type="ProteomicsDB" id="236573"/>
<dbReference type="EnsemblPlants" id="AT1G11590.1">
    <property type="protein sequence ID" value="AT1G11590.1"/>
    <property type="gene ID" value="AT1G11590"/>
</dbReference>
<dbReference type="GeneID" id="837702"/>
<dbReference type="Gramene" id="AT1G11590.1">
    <property type="protein sequence ID" value="AT1G11590.1"/>
    <property type="gene ID" value="AT1G11590"/>
</dbReference>
<dbReference type="KEGG" id="ath:AT1G11590"/>
<dbReference type="Araport" id="AT1G11590"/>
<dbReference type="TAIR" id="AT1G11590">
    <property type="gene designation" value="PME19"/>
</dbReference>
<dbReference type="eggNOG" id="ENOG502QUQ5">
    <property type="taxonomic scope" value="Eukaryota"/>
</dbReference>
<dbReference type="HOGENOM" id="CLU_012243_9_2_1"/>
<dbReference type="InParanoid" id="Q84JX1"/>
<dbReference type="OMA" id="RRIDMVM"/>
<dbReference type="PhylomeDB" id="Q84JX1"/>
<dbReference type="BioCyc" id="ARA:AT1G11590-MONOMER"/>
<dbReference type="UniPathway" id="UPA00545">
    <property type="reaction ID" value="UER00823"/>
</dbReference>
<dbReference type="PRO" id="PR:Q84JX1"/>
<dbReference type="Proteomes" id="UP000006548">
    <property type="component" value="Chromosome 1"/>
</dbReference>
<dbReference type="ExpressionAtlas" id="Q84JX1">
    <property type="expression patterns" value="baseline and differential"/>
</dbReference>
<dbReference type="GO" id="GO:0005576">
    <property type="term" value="C:extracellular region"/>
    <property type="evidence" value="ECO:0007669"/>
    <property type="project" value="UniProtKB-KW"/>
</dbReference>
<dbReference type="GO" id="GO:0004857">
    <property type="term" value="F:enzyme inhibitor activity"/>
    <property type="evidence" value="ECO:0007669"/>
    <property type="project" value="InterPro"/>
</dbReference>
<dbReference type="GO" id="GO:0030599">
    <property type="term" value="F:pectinesterase activity"/>
    <property type="evidence" value="ECO:0007669"/>
    <property type="project" value="UniProtKB-EC"/>
</dbReference>
<dbReference type="GO" id="GO:0042545">
    <property type="term" value="P:cell wall modification"/>
    <property type="evidence" value="ECO:0007669"/>
    <property type="project" value="InterPro"/>
</dbReference>
<dbReference type="GO" id="GO:0045490">
    <property type="term" value="P:pectin catabolic process"/>
    <property type="evidence" value="ECO:0007669"/>
    <property type="project" value="UniProtKB-UniPathway"/>
</dbReference>
<dbReference type="CDD" id="cd15799">
    <property type="entry name" value="PMEI-like_4"/>
    <property type="match status" value="1"/>
</dbReference>
<dbReference type="FunFam" id="1.20.140.40:FF:000015">
    <property type="entry name" value="Pectinesterase 3"/>
    <property type="match status" value="1"/>
</dbReference>
<dbReference type="FunFam" id="2.160.20.10:FF:000029">
    <property type="entry name" value="Pectinesterase 4"/>
    <property type="match status" value="1"/>
</dbReference>
<dbReference type="Gene3D" id="1.20.140.40">
    <property type="entry name" value="Invertase/pectin methylesterase inhibitor family protein"/>
    <property type="match status" value="1"/>
</dbReference>
<dbReference type="Gene3D" id="2.160.20.10">
    <property type="entry name" value="Single-stranded right-handed beta-helix, Pectin lyase-like"/>
    <property type="match status" value="1"/>
</dbReference>
<dbReference type="InterPro" id="IPR035513">
    <property type="entry name" value="Invertase/methylesterase_inhib"/>
</dbReference>
<dbReference type="InterPro" id="IPR012334">
    <property type="entry name" value="Pectin_lyas_fold"/>
</dbReference>
<dbReference type="InterPro" id="IPR011050">
    <property type="entry name" value="Pectin_lyase_fold/virulence"/>
</dbReference>
<dbReference type="InterPro" id="IPR000070">
    <property type="entry name" value="Pectinesterase_cat"/>
</dbReference>
<dbReference type="InterPro" id="IPR006501">
    <property type="entry name" value="Pectinesterase_inhib_dom"/>
</dbReference>
<dbReference type="InterPro" id="IPR018040">
    <property type="entry name" value="Pectinesterase_Tyr_AS"/>
</dbReference>
<dbReference type="PANTHER" id="PTHR31707">
    <property type="entry name" value="PECTINESTERASE"/>
    <property type="match status" value="1"/>
</dbReference>
<dbReference type="Pfam" id="PF01095">
    <property type="entry name" value="Pectinesterase"/>
    <property type="match status" value="1"/>
</dbReference>
<dbReference type="Pfam" id="PF04043">
    <property type="entry name" value="PMEI"/>
    <property type="match status" value="1"/>
</dbReference>
<dbReference type="SMART" id="SM00856">
    <property type="entry name" value="PMEI"/>
    <property type="match status" value="1"/>
</dbReference>
<dbReference type="SUPFAM" id="SSF51126">
    <property type="entry name" value="Pectin lyase-like"/>
    <property type="match status" value="1"/>
</dbReference>
<dbReference type="SUPFAM" id="SSF101148">
    <property type="entry name" value="Plant invertase/pectin methylesterase inhibitor"/>
    <property type="match status" value="1"/>
</dbReference>
<dbReference type="PROSITE" id="PS00800">
    <property type="entry name" value="PECTINESTERASE_1"/>
    <property type="match status" value="1"/>
</dbReference>
<accession>Q84JX1</accession>
<accession>Q9LPX7</accession>
<comment type="function">
    <text evidence="1">Acts in the modification of cell walls via demethylesterification of cell wall pectin.</text>
</comment>
<comment type="catalytic activity">
    <reaction>
        <text>[(1-&gt;4)-alpha-D-galacturonosyl methyl ester](n) + n H2O = [(1-&gt;4)-alpha-D-galacturonosyl](n) + n methanol + n H(+)</text>
        <dbReference type="Rhea" id="RHEA:22380"/>
        <dbReference type="Rhea" id="RHEA-COMP:14570"/>
        <dbReference type="Rhea" id="RHEA-COMP:14573"/>
        <dbReference type="ChEBI" id="CHEBI:15377"/>
        <dbReference type="ChEBI" id="CHEBI:15378"/>
        <dbReference type="ChEBI" id="CHEBI:17790"/>
        <dbReference type="ChEBI" id="CHEBI:140522"/>
        <dbReference type="ChEBI" id="CHEBI:140523"/>
        <dbReference type="EC" id="3.1.1.11"/>
    </reaction>
</comment>
<comment type="pathway">
    <text>Glycan metabolism; pectin degradation; 2-dehydro-3-deoxy-D-gluconate from pectin: step 1/5.</text>
</comment>
<comment type="subcellular location">
    <subcellularLocation>
        <location evidence="1">Secreted</location>
        <location evidence="1">Cell wall</location>
    </subcellularLocation>
</comment>
<comment type="tissue specificity">
    <text evidence="3">Expressed in siliques, but not in flower buds.</text>
</comment>
<comment type="developmental stage">
    <text evidence="3">Expression restricted to early to mid-stage of silique development. Not found in vegetative stage. Expressed in the micropyle area of the ovule just after fertilization.</text>
</comment>
<comment type="miscellaneous">
    <text>The PMEI region may act as an autoinhibitory domain and prevent untimely PME activity during transport.</text>
</comment>
<comment type="similarity">
    <text evidence="4">In the N-terminal section; belongs to the PMEI family.</text>
</comment>
<comment type="similarity">
    <text evidence="4">In the C-terminal section; belongs to the pectinesterase family.</text>
</comment>
<comment type="sequence caution" evidence="4">
    <conflict type="erroneous gene model prediction">
        <sequence resource="EMBL-CDS" id="AAF16638"/>
    </conflict>
</comment>